<gene>
    <name evidence="1" type="primary">rpl22</name>
    <name type="ordered locus">Tpen_0489</name>
</gene>
<keyword id="KW-1185">Reference proteome</keyword>
<keyword id="KW-0687">Ribonucleoprotein</keyword>
<keyword id="KW-0689">Ribosomal protein</keyword>
<keyword id="KW-0694">RNA-binding</keyword>
<keyword id="KW-0699">rRNA-binding</keyword>
<evidence type="ECO:0000255" key="1">
    <source>
        <dbReference type="HAMAP-Rule" id="MF_01331"/>
    </source>
</evidence>
<evidence type="ECO:0000305" key="2"/>
<sequence>MPTWRYSVELEPERTAKASLRDVSMSYKLTVETLRLIKGKSIEEARRILTEIAEMKRSVPLKRYNKKVGHRSDVPGPGRYPVKVAKNLLKLLDNLENNAEFKGLNVENLRIVHAAAHKGMKIRNYLPRAFGRATPYYDQLVHVEIIAREVE</sequence>
<reference key="1">
    <citation type="journal article" date="2008" name="J. Bacteriol.">
        <title>Genome sequence of Thermofilum pendens reveals an exceptional loss of biosynthetic pathways without genome reduction.</title>
        <authorList>
            <person name="Anderson I."/>
            <person name="Rodriguez J."/>
            <person name="Susanti D."/>
            <person name="Porat I."/>
            <person name="Reich C."/>
            <person name="Ulrich L.E."/>
            <person name="Elkins J.G."/>
            <person name="Mavromatis K."/>
            <person name="Lykidis A."/>
            <person name="Kim E."/>
            <person name="Thompson L.S."/>
            <person name="Nolan M."/>
            <person name="Land M."/>
            <person name="Copeland A."/>
            <person name="Lapidus A."/>
            <person name="Lucas S."/>
            <person name="Detter C."/>
            <person name="Zhulin I.B."/>
            <person name="Olsen G.J."/>
            <person name="Whitman W."/>
            <person name="Mukhopadhyay B."/>
            <person name="Bristow J."/>
            <person name="Kyrpides N."/>
        </authorList>
    </citation>
    <scope>NUCLEOTIDE SEQUENCE [LARGE SCALE GENOMIC DNA]</scope>
    <source>
        <strain>DSM 2475 / Hrk 5</strain>
    </source>
</reference>
<feature type="chain" id="PRO_0000354549" description="Large ribosomal subunit protein uL22">
    <location>
        <begin position="1"/>
        <end position="151"/>
    </location>
</feature>
<comment type="function">
    <text evidence="1">This protein binds specifically to 23S rRNA. It makes multiple contacts with different domains of the 23S rRNA in the assembled 50S subunit and ribosome.</text>
</comment>
<comment type="function">
    <text evidence="1">The globular domain of the protein is located near the polypeptide exit tunnel on the outside of the subunit, while an extended beta-hairpin is found that lines the wall of the exit tunnel in the center of the 70S ribosome.</text>
</comment>
<comment type="subunit">
    <text evidence="1">Part of the 50S ribosomal subunit.</text>
</comment>
<comment type="similarity">
    <text evidence="1">Belongs to the universal ribosomal protein uL22 family.</text>
</comment>
<comment type="sequence caution" evidence="2">
    <conflict type="erroneous initiation">
        <sequence resource="EMBL-CDS" id="ABL77897"/>
    </conflict>
    <text>Truncated N-terminus.</text>
</comment>
<name>RL22_THEPD</name>
<organism>
    <name type="scientific">Thermofilum pendens (strain DSM 2475 / Hrk 5)</name>
    <dbReference type="NCBI Taxonomy" id="368408"/>
    <lineage>
        <taxon>Archaea</taxon>
        <taxon>Thermoproteota</taxon>
        <taxon>Thermoprotei</taxon>
        <taxon>Thermofilales</taxon>
        <taxon>Thermofilaceae</taxon>
        <taxon>Thermofilum</taxon>
    </lineage>
</organism>
<accession>A1RXG7</accession>
<protein>
    <recommendedName>
        <fullName evidence="1">Large ribosomal subunit protein uL22</fullName>
    </recommendedName>
    <alternativeName>
        <fullName evidence="2">50S ribosomal protein L22</fullName>
    </alternativeName>
</protein>
<proteinExistence type="inferred from homology"/>
<dbReference type="EMBL" id="CP000505">
    <property type="protein sequence ID" value="ABL77897.1"/>
    <property type="status" value="ALT_INIT"/>
    <property type="molecule type" value="Genomic_DNA"/>
</dbReference>
<dbReference type="RefSeq" id="WP_052885053.1">
    <property type="nucleotide sequence ID" value="NC_008698.1"/>
</dbReference>
<dbReference type="SMR" id="A1RXG7"/>
<dbReference type="STRING" id="368408.Tpen_0489"/>
<dbReference type="EnsemblBacteria" id="ABL77897">
    <property type="protein sequence ID" value="ABL77897"/>
    <property type="gene ID" value="Tpen_0489"/>
</dbReference>
<dbReference type="GeneID" id="4601787"/>
<dbReference type="KEGG" id="tpe:Tpen_0489"/>
<dbReference type="eggNOG" id="arCOG04098">
    <property type="taxonomic scope" value="Archaea"/>
</dbReference>
<dbReference type="HOGENOM" id="CLU_083987_0_2_2"/>
<dbReference type="OrthoDB" id="314984at2157"/>
<dbReference type="Proteomes" id="UP000000641">
    <property type="component" value="Chromosome"/>
</dbReference>
<dbReference type="GO" id="GO:0022625">
    <property type="term" value="C:cytosolic large ribosomal subunit"/>
    <property type="evidence" value="ECO:0007669"/>
    <property type="project" value="TreeGrafter"/>
</dbReference>
<dbReference type="GO" id="GO:0019843">
    <property type="term" value="F:rRNA binding"/>
    <property type="evidence" value="ECO:0007669"/>
    <property type="project" value="UniProtKB-UniRule"/>
</dbReference>
<dbReference type="GO" id="GO:0003735">
    <property type="term" value="F:structural constituent of ribosome"/>
    <property type="evidence" value="ECO:0007669"/>
    <property type="project" value="InterPro"/>
</dbReference>
<dbReference type="GO" id="GO:0002181">
    <property type="term" value="P:cytoplasmic translation"/>
    <property type="evidence" value="ECO:0007669"/>
    <property type="project" value="TreeGrafter"/>
</dbReference>
<dbReference type="Gene3D" id="3.90.470.10">
    <property type="entry name" value="Ribosomal protein L22/L17"/>
    <property type="match status" value="1"/>
</dbReference>
<dbReference type="HAMAP" id="MF_01331_A">
    <property type="entry name" value="Ribosomal_uL22_A"/>
    <property type="match status" value="1"/>
</dbReference>
<dbReference type="InterPro" id="IPR001063">
    <property type="entry name" value="Ribosomal_uL22"/>
</dbReference>
<dbReference type="InterPro" id="IPR005721">
    <property type="entry name" value="Ribosomal_uL22_euk/arc"/>
</dbReference>
<dbReference type="InterPro" id="IPR036394">
    <property type="entry name" value="Ribosomal_uL22_sf"/>
</dbReference>
<dbReference type="NCBIfam" id="NF003260">
    <property type="entry name" value="PRK04223.1"/>
    <property type="match status" value="1"/>
</dbReference>
<dbReference type="NCBIfam" id="TIGR01038">
    <property type="entry name" value="uL22_arch_euk"/>
    <property type="match status" value="1"/>
</dbReference>
<dbReference type="PANTHER" id="PTHR11593">
    <property type="entry name" value="60S RIBOSOMAL PROTEIN L17"/>
    <property type="match status" value="1"/>
</dbReference>
<dbReference type="PANTHER" id="PTHR11593:SF10">
    <property type="entry name" value="60S RIBOSOMAL PROTEIN L17"/>
    <property type="match status" value="1"/>
</dbReference>
<dbReference type="Pfam" id="PF00237">
    <property type="entry name" value="Ribosomal_L22"/>
    <property type="match status" value="1"/>
</dbReference>
<dbReference type="SUPFAM" id="SSF54843">
    <property type="entry name" value="Ribosomal protein L22"/>
    <property type="match status" value="1"/>
</dbReference>